<comment type="function">
    <text evidence="1">Inactivates the type B streptogramin antibiotics by linearizing the lactone ring at the ester linkage, generating a free phenylglycine carboxylate and converting the threonyl moiety into 2-amino-butenoic acid.</text>
</comment>
<comment type="cofactor">
    <cofactor evidence="1">
        <name>Mg(2+)</name>
        <dbReference type="ChEBI" id="CHEBI:18420"/>
    </cofactor>
</comment>
<comment type="biophysicochemical properties">
    <kinetics>
        <KM evidence="1 2">8 uM for quinupristin</KM>
        <KM evidence="1 2">19 uM for pristinamycin IA</KM>
        <KM evidence="1 2">0.19 mM for magnesium</KM>
    </kinetics>
</comment>
<comment type="subunit">
    <text evidence="1 2">Monomer.</text>
</comment>
<comment type="miscellaneous">
    <text evidence="4">Has unequivocally been shown (PubMed:11467949) to cleave the ester bond of streptogramin B antibiotics by an elimination reaction and not by hydrolysis, therefore is a lyase and not a hydrolase. The olefinic dehydrobutyrine thus generated in the N-terminal position has a Z stereochemistry.</text>
</comment>
<comment type="similarity">
    <text evidence="3">Belongs to the Vgb family.</text>
</comment>
<sequence>MEFKLQELNLTNQDTGPYGITVSDKGKVWITQHKANMISCINLDGKITEYPLPTPDAKVMCLTISSDGEVWFTENAANKIGRITKKGIIKEYTLPNPDSAPYGITEGPNGDIWFTEMNGNRIGRITDDGKIREYELPNKGSYPSFITLGSDNALWFTENQNNAIGRITESGDITEFKIPTPASGPVGITKGNDDALWFVEIIGNKIGRITPLGEITEFKIPTPNARPHAITAGAGIDLWFTEWGANKIGRLTSNNIIEEYPIQIKSGEPHGICFDGETIWFAMECDKIGKLTLIKDNME</sequence>
<geneLocation type="plasmid">
    <name>pIP630</name>
</geneLocation>
<geneLocation type="plasmid">
    <name>pIP524</name>
</geneLocation>
<accession>P17978</accession>
<accession>Q53744</accession>
<evidence type="ECO:0000269" key="1">
    <source>
    </source>
</evidence>
<evidence type="ECO:0000269" key="2">
    <source>
    </source>
</evidence>
<evidence type="ECO:0000305" key="3"/>
<evidence type="ECO:0000305" key="4">
    <source>
    </source>
</evidence>
<evidence type="ECO:0007829" key="5">
    <source>
        <dbReference type="PDB" id="2Z2N"/>
    </source>
</evidence>
<evidence type="ECO:0007829" key="6">
    <source>
        <dbReference type="PDB" id="2Z2P"/>
    </source>
</evidence>
<reference key="1">
    <citation type="journal article" date="1988" name="Plasmid">
        <title>Nucleotide sequence of a staphylococcal plasmid gene, vgb, encoding a hydrolase inactivating the B components of virginiamycin-like antibiotics.</title>
        <authorList>
            <person name="Allignet J."/>
            <person name="Loncle V."/>
            <person name="Mazodier P."/>
            <person name="El Solh N."/>
        </authorList>
    </citation>
    <scope>NUCLEOTIDE SEQUENCE [GENOMIC DNA]</scope>
    <source>
        <plasmid>pIP630</plasmid>
    </source>
</reference>
<reference key="2">
    <citation type="journal article" date="1999" name="Plasmid">
        <title>Comparative analysis of staphylococcal plasmids carrying three streptogramin-resistance genes: vat-vgb-vga.</title>
        <authorList>
            <person name="Allignet J."/>
            <person name="El Solh N."/>
        </authorList>
    </citation>
    <scope>NUCLEOTIDE SEQUENCE [GENOMIC DNA]</scope>
    <source>
        <strain>BM3093</strain>
        <plasmid>pIP630</plasmid>
    </source>
</reference>
<reference key="3">
    <citation type="journal article" date="2001" name="Biochemistry">
        <title>Vgb from Staphylococcus aureus inactivates streptogramin B antibiotics by an elimination mechanism not hydrolysis.</title>
        <authorList>
            <person name="Mukhtar T.A."/>
            <person name="Koteva K.P."/>
            <person name="Hughes D.W."/>
            <person name="Wright G.D."/>
        </authorList>
    </citation>
    <scope>FUNCTION AS A LYASE</scope>
    <scope>REACTION MECHANISM</scope>
    <scope>SUBSTRATE SPECIFICITY</scope>
    <scope>SUBUNIT</scope>
    <scope>COFACTOR</scope>
    <scope>BIOPHYSICOCHEMICAL PROPERTIES</scope>
    <source>
        <strain>BM3002</strain>
        <plasmid>pIP524</plasmid>
    </source>
</reference>
<reference key="4">
    <citation type="journal article" date="2007" name="Proc. Natl. Acad. Sci. U.S.A.">
        <title>Structural basis for streptogramin B resistance in Staphylococcus aureus by virginiamycin B lyase.</title>
        <authorList>
            <person name="Korczynska M."/>
            <person name="Mukhtar T.A."/>
            <person name="Wright G.D."/>
            <person name="Berghuis A.M."/>
        </authorList>
    </citation>
    <scope>X-RAY CRYSTALLOGRAPHY (1.65 ANGSTROMS) OF WILD-TYPE AND MUTANT ALA-270 IN COMPLEX WITH QUINUPRISTIN AND MAGNESIUM</scope>
    <scope>CATALYTIC MECHANISM</scope>
    <scope>BIOPHYSICOCHEMICAL PROPERTIES</scope>
    <scope>MUTAGENESIS OF TYR-18; HIS-228; GLU-268; HIS-270 AND GLU-284</scope>
    <source>
        <strain>BM3002</strain>
        <plasmid>pIP524</plasmid>
    </source>
</reference>
<keyword id="KW-0002">3D-structure</keyword>
<keyword id="KW-0046">Antibiotic resistance</keyword>
<keyword id="KW-0456">Lyase</keyword>
<keyword id="KW-0460">Magnesium</keyword>
<keyword id="KW-0479">Metal-binding</keyword>
<keyword id="KW-0614">Plasmid</keyword>
<dbReference type="EC" id="4.2.99.-"/>
<dbReference type="EMBL" id="M36022">
    <property type="protein sequence ID" value="AAA98259.1"/>
    <property type="molecule type" value="Genomic_DNA"/>
</dbReference>
<dbReference type="EMBL" id="M20129">
    <property type="protein sequence ID" value="AAA98349.1"/>
    <property type="molecule type" value="Genomic_DNA"/>
</dbReference>
<dbReference type="EMBL" id="AF117258">
    <property type="protein sequence ID" value="AAF24088.1"/>
    <property type="molecule type" value="Genomic_DNA"/>
</dbReference>
<dbReference type="PIR" id="S27668">
    <property type="entry name" value="PN0638"/>
</dbReference>
<dbReference type="PDB" id="2Z2N">
    <property type="method" value="X-ray"/>
    <property type="resolution" value="1.65 A"/>
    <property type="chains" value="A=1-299"/>
</dbReference>
<dbReference type="PDB" id="2Z2O">
    <property type="method" value="X-ray"/>
    <property type="resolution" value="1.90 A"/>
    <property type="chains" value="A/B/C/D=1-299"/>
</dbReference>
<dbReference type="PDB" id="2Z2P">
    <property type="method" value="X-ray"/>
    <property type="resolution" value="2.80 A"/>
    <property type="chains" value="A/B=1-299"/>
</dbReference>
<dbReference type="PDBsum" id="2Z2N"/>
<dbReference type="PDBsum" id="2Z2O"/>
<dbReference type="PDBsum" id="2Z2P"/>
<dbReference type="SMR" id="P17978"/>
<dbReference type="KEGG" id="ag:AAA98349"/>
<dbReference type="SABIO-RK" id="P17978"/>
<dbReference type="EvolutionaryTrace" id="P17978"/>
<dbReference type="GO" id="GO:0016835">
    <property type="term" value="F:carbon-oxygen lyase activity"/>
    <property type="evidence" value="ECO:0007669"/>
    <property type="project" value="UniProtKB-UniRule"/>
</dbReference>
<dbReference type="GO" id="GO:0000287">
    <property type="term" value="F:magnesium ion binding"/>
    <property type="evidence" value="ECO:0007669"/>
    <property type="project" value="InterPro"/>
</dbReference>
<dbReference type="GO" id="GO:0017001">
    <property type="term" value="P:antibiotic catabolic process"/>
    <property type="evidence" value="ECO:0007669"/>
    <property type="project" value="UniProtKB-UniRule"/>
</dbReference>
<dbReference type="GO" id="GO:0046677">
    <property type="term" value="P:response to antibiotic"/>
    <property type="evidence" value="ECO:0007669"/>
    <property type="project" value="UniProtKB-KW"/>
</dbReference>
<dbReference type="Gene3D" id="2.130.10.10">
    <property type="entry name" value="YVTN repeat-like/Quinoprotein amine dehydrogenase"/>
    <property type="match status" value="1"/>
</dbReference>
<dbReference type="HAMAP" id="MF_01282">
    <property type="entry name" value="VirginiamycinB_lyase"/>
    <property type="match status" value="1"/>
</dbReference>
<dbReference type="InterPro" id="IPR011217">
    <property type="entry name" value="Streptogrm_lyase"/>
</dbReference>
<dbReference type="InterPro" id="IPR051344">
    <property type="entry name" value="Vgb"/>
</dbReference>
<dbReference type="InterPro" id="IPR015943">
    <property type="entry name" value="WD40/YVTN_repeat-like_dom_sf"/>
</dbReference>
<dbReference type="NCBIfam" id="NF000022">
    <property type="entry name" value="stregra_B_VgbA"/>
    <property type="match status" value="1"/>
</dbReference>
<dbReference type="PANTHER" id="PTHR40274">
    <property type="entry name" value="VIRGINIAMYCIN B LYASE"/>
    <property type="match status" value="1"/>
</dbReference>
<dbReference type="PANTHER" id="PTHR40274:SF3">
    <property type="entry name" value="VIRGINIAMYCIN B LYASE"/>
    <property type="match status" value="1"/>
</dbReference>
<dbReference type="Pfam" id="PF24684">
    <property type="entry name" value="Vgb_lyase"/>
    <property type="match status" value="1"/>
</dbReference>
<dbReference type="PIRSF" id="PIRSF026412">
    <property type="entry name" value="Streptogrm_lyase"/>
    <property type="match status" value="1"/>
</dbReference>
<dbReference type="SUPFAM" id="SSF63829">
    <property type="entry name" value="Calcium-dependent phosphotriesterase"/>
    <property type="match status" value="1"/>
</dbReference>
<name>VGB_STAAU</name>
<gene>
    <name type="primary">vgb</name>
    <name type="synonym">vgh</name>
</gene>
<proteinExistence type="evidence at protein level"/>
<protein>
    <recommendedName>
        <fullName>Virginiamycin B lyase</fullName>
        <ecNumber>4.2.99.-</ecNumber>
    </recommendedName>
    <alternativeName>
        <fullName>Streptogramin B lyase</fullName>
    </alternativeName>
</protein>
<feature type="chain" id="PRO_0000068590" description="Virginiamycin B lyase">
    <location>
        <begin position="1"/>
        <end position="299"/>
    </location>
</feature>
<feature type="active site" description="Proton acceptor">
    <location>
        <position position="270"/>
    </location>
</feature>
<feature type="binding site">
    <location>
        <position position="228"/>
    </location>
    <ligand>
        <name>substrate</name>
    </ligand>
</feature>
<feature type="binding site" evidence="2">
    <location>
        <position position="268"/>
    </location>
    <ligand>
        <name>Mg(2+)</name>
        <dbReference type="ChEBI" id="CHEBI:18420"/>
    </ligand>
</feature>
<feature type="binding site" evidence="2">
    <location>
        <position position="284"/>
    </location>
    <ligand>
        <name>Mg(2+)</name>
        <dbReference type="ChEBI" id="CHEBI:18420"/>
    </ligand>
</feature>
<feature type="mutagenesis site" description="600-fold decrease in catalytic efficiency." evidence="2">
    <original>Y</original>
    <variation>F</variation>
    <location>
        <position position="18"/>
    </location>
</feature>
<feature type="mutagenesis site" description="Loss of activity." evidence="2">
    <original>H</original>
    <variation>A</variation>
    <location>
        <position position="228"/>
    </location>
</feature>
<feature type="mutagenesis site" description="56-fold decrease in catalytic efficiency." evidence="2">
    <original>E</original>
    <variation>Q</variation>
    <location>
        <position position="268"/>
    </location>
</feature>
<feature type="mutagenesis site" description="Loss of activity." evidence="2">
    <original>H</original>
    <variation>A</variation>
    <location>
        <position position="270"/>
    </location>
</feature>
<feature type="mutagenesis site" description="137-fold decrease in catalytic efficiency." evidence="2">
    <original>E</original>
    <variation>Q</variation>
    <location>
        <position position="284"/>
    </location>
</feature>
<feature type="sequence conflict" description="In Ref. 1; AAA98349 and 2; AAF24088." evidence="3" ref="1 2">
    <original>G</original>
    <variation>A</variation>
    <location>
        <position position="267"/>
    </location>
</feature>
<feature type="strand" evidence="5">
    <location>
        <begin position="3"/>
        <end position="9"/>
    </location>
</feature>
<feature type="strand" evidence="5">
    <location>
        <begin position="12"/>
        <end position="14"/>
    </location>
</feature>
<feature type="strand" evidence="5">
    <location>
        <begin position="17"/>
        <end position="22"/>
    </location>
</feature>
<feature type="strand" evidence="6">
    <location>
        <begin position="24"/>
        <end position="26"/>
    </location>
</feature>
<feature type="strand" evidence="5">
    <location>
        <begin position="28"/>
        <end position="32"/>
    </location>
</feature>
<feature type="turn" evidence="5">
    <location>
        <begin position="33"/>
        <end position="36"/>
    </location>
</feature>
<feature type="strand" evidence="5">
    <location>
        <begin position="37"/>
        <end position="41"/>
    </location>
</feature>
<feature type="strand" evidence="5">
    <location>
        <begin position="47"/>
        <end position="51"/>
    </location>
</feature>
<feature type="strand" evidence="6">
    <location>
        <begin position="53"/>
        <end position="55"/>
    </location>
</feature>
<feature type="strand" evidence="5">
    <location>
        <begin position="59"/>
        <end position="64"/>
    </location>
</feature>
<feature type="strand" evidence="5">
    <location>
        <begin position="70"/>
        <end position="74"/>
    </location>
</feature>
<feature type="turn" evidence="5">
    <location>
        <begin position="75"/>
        <end position="78"/>
    </location>
</feature>
<feature type="strand" evidence="5">
    <location>
        <begin position="79"/>
        <end position="83"/>
    </location>
</feature>
<feature type="strand" evidence="5">
    <location>
        <begin position="89"/>
        <end position="93"/>
    </location>
</feature>
<feature type="strand" evidence="5">
    <location>
        <begin position="101"/>
        <end position="106"/>
    </location>
</feature>
<feature type="strand" evidence="5">
    <location>
        <begin position="112"/>
        <end position="116"/>
    </location>
</feature>
<feature type="turn" evidence="5">
    <location>
        <begin position="117"/>
        <end position="120"/>
    </location>
</feature>
<feature type="strand" evidence="5">
    <location>
        <begin position="121"/>
        <end position="125"/>
    </location>
</feature>
<feature type="strand" evidence="5">
    <location>
        <begin position="131"/>
        <end position="135"/>
    </location>
</feature>
<feature type="strand" evidence="5">
    <location>
        <begin position="143"/>
        <end position="148"/>
    </location>
</feature>
<feature type="strand" evidence="5">
    <location>
        <begin position="154"/>
        <end position="158"/>
    </location>
</feature>
<feature type="turn" evidence="5">
    <location>
        <begin position="159"/>
        <end position="162"/>
    </location>
</feature>
<feature type="strand" evidence="5">
    <location>
        <begin position="163"/>
        <end position="167"/>
    </location>
</feature>
<feature type="strand" evidence="5">
    <location>
        <begin position="173"/>
        <end position="177"/>
    </location>
</feature>
<feature type="strand" evidence="5">
    <location>
        <begin position="185"/>
        <end position="190"/>
    </location>
</feature>
<feature type="strand" evidence="5">
    <location>
        <begin position="194"/>
        <end position="200"/>
    </location>
</feature>
<feature type="turn" evidence="5">
    <location>
        <begin position="201"/>
        <end position="204"/>
    </location>
</feature>
<feature type="strand" evidence="5">
    <location>
        <begin position="205"/>
        <end position="209"/>
    </location>
</feature>
<feature type="strand" evidence="5">
    <location>
        <begin position="215"/>
        <end position="219"/>
    </location>
</feature>
<feature type="strand" evidence="5">
    <location>
        <begin position="227"/>
        <end position="232"/>
    </location>
</feature>
<feature type="strand" evidence="5">
    <location>
        <begin position="238"/>
        <end position="242"/>
    </location>
</feature>
<feature type="turn" evidence="5">
    <location>
        <begin position="243"/>
        <end position="246"/>
    </location>
</feature>
<feature type="strand" evidence="5">
    <location>
        <begin position="247"/>
        <end position="252"/>
    </location>
</feature>
<feature type="turn" evidence="5">
    <location>
        <begin position="253"/>
        <end position="255"/>
    </location>
</feature>
<feature type="strand" evidence="5">
    <location>
        <begin position="256"/>
        <end position="261"/>
    </location>
</feature>
<feature type="strand" evidence="5">
    <location>
        <begin position="263"/>
        <end position="266"/>
    </location>
</feature>
<feature type="strand" evidence="5">
    <location>
        <begin position="269"/>
        <end position="274"/>
    </location>
</feature>
<feature type="strand" evidence="5">
    <location>
        <begin position="279"/>
        <end position="283"/>
    </location>
</feature>
<feature type="turn" evidence="5">
    <location>
        <begin position="284"/>
        <end position="286"/>
    </location>
</feature>
<feature type="strand" evidence="5">
    <location>
        <begin position="287"/>
        <end position="293"/>
    </location>
</feature>
<organism>
    <name type="scientific">Staphylococcus aureus</name>
    <dbReference type="NCBI Taxonomy" id="1280"/>
    <lineage>
        <taxon>Bacteria</taxon>
        <taxon>Bacillati</taxon>
        <taxon>Bacillota</taxon>
        <taxon>Bacilli</taxon>
        <taxon>Bacillales</taxon>
        <taxon>Staphylococcaceae</taxon>
        <taxon>Staphylococcus</taxon>
    </lineage>
</organism>